<protein>
    <recommendedName>
        <fullName>Phosphocarrier protein HPr</fullName>
    </recommendedName>
    <alternativeName>
        <fullName>Histidine-containing protein</fullName>
    </alternativeName>
</protein>
<name>PTHP_HAEIN</name>
<evidence type="ECO:0000250" key="1"/>
<evidence type="ECO:0000255" key="2">
    <source>
        <dbReference type="PROSITE-ProRule" id="PRU00681"/>
    </source>
</evidence>
<evidence type="ECO:0000305" key="3"/>
<accession>P43921</accession>
<organism>
    <name type="scientific">Haemophilus influenzae (strain ATCC 51907 / DSM 11121 / KW20 / Rd)</name>
    <dbReference type="NCBI Taxonomy" id="71421"/>
    <lineage>
        <taxon>Bacteria</taxon>
        <taxon>Pseudomonadati</taxon>
        <taxon>Pseudomonadota</taxon>
        <taxon>Gammaproteobacteria</taxon>
        <taxon>Pasteurellales</taxon>
        <taxon>Pasteurellaceae</taxon>
        <taxon>Haemophilus</taxon>
    </lineage>
</organism>
<dbReference type="EMBL" id="L42023">
    <property type="protein sequence ID" value="AAC23358.1"/>
    <property type="molecule type" value="Genomic_DNA"/>
</dbReference>
<dbReference type="PIR" id="I64137">
    <property type="entry name" value="I64137"/>
</dbReference>
<dbReference type="RefSeq" id="NP_439855.1">
    <property type="nucleotide sequence ID" value="NC_000907.1"/>
</dbReference>
<dbReference type="SMR" id="P43921"/>
<dbReference type="STRING" id="71421.HI_1713"/>
<dbReference type="EnsemblBacteria" id="AAC23358">
    <property type="protein sequence ID" value="AAC23358"/>
    <property type="gene ID" value="HI_1713"/>
</dbReference>
<dbReference type="KEGG" id="hin:HI_1713"/>
<dbReference type="PATRIC" id="fig|71421.8.peg.1792"/>
<dbReference type="eggNOG" id="COG1925">
    <property type="taxonomic scope" value="Bacteria"/>
</dbReference>
<dbReference type="HOGENOM" id="CLU_136230_2_3_6"/>
<dbReference type="OrthoDB" id="9809047at2"/>
<dbReference type="PhylomeDB" id="P43921"/>
<dbReference type="BioCyc" id="HINF71421:G1GJ1-1728-MONOMER"/>
<dbReference type="Proteomes" id="UP000000579">
    <property type="component" value="Chromosome"/>
</dbReference>
<dbReference type="GO" id="GO:0005737">
    <property type="term" value="C:cytoplasm"/>
    <property type="evidence" value="ECO:0007669"/>
    <property type="project" value="UniProtKB-SubCell"/>
</dbReference>
<dbReference type="GO" id="GO:0009401">
    <property type="term" value="P:phosphoenolpyruvate-dependent sugar phosphotransferase system"/>
    <property type="evidence" value="ECO:0000318"/>
    <property type="project" value="GO_Central"/>
</dbReference>
<dbReference type="CDD" id="cd00367">
    <property type="entry name" value="PTS-HPr_like"/>
    <property type="match status" value="1"/>
</dbReference>
<dbReference type="Gene3D" id="3.30.1340.10">
    <property type="entry name" value="HPr-like"/>
    <property type="match status" value="1"/>
</dbReference>
<dbReference type="InterPro" id="IPR050399">
    <property type="entry name" value="HPr"/>
</dbReference>
<dbReference type="InterPro" id="IPR000032">
    <property type="entry name" value="HPr-like"/>
</dbReference>
<dbReference type="InterPro" id="IPR035895">
    <property type="entry name" value="HPr-like_sf"/>
</dbReference>
<dbReference type="InterPro" id="IPR001020">
    <property type="entry name" value="PTS_HPr_His_P_site"/>
</dbReference>
<dbReference type="InterPro" id="IPR002114">
    <property type="entry name" value="PTS_HPr_Ser_P_site"/>
</dbReference>
<dbReference type="NCBIfam" id="TIGR01003">
    <property type="entry name" value="PTS_HPr_family"/>
    <property type="match status" value="1"/>
</dbReference>
<dbReference type="PANTHER" id="PTHR33705">
    <property type="entry name" value="PHOSPHOCARRIER PROTEIN HPR"/>
    <property type="match status" value="1"/>
</dbReference>
<dbReference type="PANTHER" id="PTHR33705:SF1">
    <property type="entry name" value="PHOSPHOCARRIER PROTEIN HPR"/>
    <property type="match status" value="1"/>
</dbReference>
<dbReference type="Pfam" id="PF00381">
    <property type="entry name" value="PTS-HPr"/>
    <property type="match status" value="1"/>
</dbReference>
<dbReference type="PRINTS" id="PR00107">
    <property type="entry name" value="PHOSPHOCPHPR"/>
</dbReference>
<dbReference type="SUPFAM" id="SSF55594">
    <property type="entry name" value="HPr-like"/>
    <property type="match status" value="1"/>
</dbReference>
<dbReference type="PROSITE" id="PS51350">
    <property type="entry name" value="PTS_HPR_DOM"/>
    <property type="match status" value="1"/>
</dbReference>
<dbReference type="PROSITE" id="PS00369">
    <property type="entry name" value="PTS_HPR_HIS"/>
    <property type="match status" value="1"/>
</dbReference>
<dbReference type="PROSITE" id="PS00589">
    <property type="entry name" value="PTS_HPR_SER"/>
    <property type="match status" value="1"/>
</dbReference>
<comment type="function">
    <text evidence="1">General (non sugar-specific) component of the phosphoenolpyruvate-dependent sugar phosphotransferase system (sugar PTS). This major carbohydrate active-transport system catalyzes the phosphorylation of incoming sugar substrates concomitantly with their translocation across the cell membrane. The phosphoryl group from phosphoenolpyruvate (PEP) is transferred to the phosphoryl carrier protein HPr by enzyme I. Phospho-HPr then transfers it to the PTS EIIA domain.</text>
</comment>
<comment type="subcellular location">
    <subcellularLocation>
        <location evidence="1">Cytoplasm</location>
    </subcellularLocation>
</comment>
<comment type="similarity">
    <text evidence="3">Belongs to the HPr family.</text>
</comment>
<gene>
    <name type="primary">ptsH</name>
    <name type="ordered locus">HI_1713</name>
</gene>
<feature type="chain" id="PRO_0000107854" description="Phosphocarrier protein HPr">
    <location>
        <begin position="1"/>
        <end position="85"/>
    </location>
</feature>
<feature type="domain" description="HPr" evidence="2">
    <location>
        <begin position="1"/>
        <end position="85"/>
    </location>
</feature>
<feature type="active site" description="Pros-phosphohistidine intermediate" evidence="2">
    <location>
        <position position="15"/>
    </location>
</feature>
<keyword id="KW-0963">Cytoplasm</keyword>
<keyword id="KW-0598">Phosphotransferase system</keyword>
<keyword id="KW-1185">Reference proteome</keyword>
<keyword id="KW-0762">Sugar transport</keyword>
<keyword id="KW-0813">Transport</keyword>
<reference key="1">
    <citation type="journal article" date="1995" name="Science">
        <title>Whole-genome random sequencing and assembly of Haemophilus influenzae Rd.</title>
        <authorList>
            <person name="Fleischmann R.D."/>
            <person name="Adams M.D."/>
            <person name="White O."/>
            <person name="Clayton R.A."/>
            <person name="Kirkness E.F."/>
            <person name="Kerlavage A.R."/>
            <person name="Bult C.J."/>
            <person name="Tomb J.-F."/>
            <person name="Dougherty B.A."/>
            <person name="Merrick J.M."/>
            <person name="McKenney K."/>
            <person name="Sutton G.G."/>
            <person name="FitzHugh W."/>
            <person name="Fields C.A."/>
            <person name="Gocayne J.D."/>
            <person name="Scott J.D."/>
            <person name="Shirley R."/>
            <person name="Liu L.-I."/>
            <person name="Glodek A."/>
            <person name="Kelley J.M."/>
            <person name="Weidman J.F."/>
            <person name="Phillips C.A."/>
            <person name="Spriggs T."/>
            <person name="Hedblom E."/>
            <person name="Cotton M.D."/>
            <person name="Utterback T.R."/>
            <person name="Hanna M.C."/>
            <person name="Nguyen D.T."/>
            <person name="Saudek D.M."/>
            <person name="Brandon R.C."/>
            <person name="Fine L.D."/>
            <person name="Fritchman J.L."/>
            <person name="Fuhrmann J.L."/>
            <person name="Geoghagen N.S.M."/>
            <person name="Gnehm C.L."/>
            <person name="McDonald L.A."/>
            <person name="Small K.V."/>
            <person name="Fraser C.M."/>
            <person name="Smith H.O."/>
            <person name="Venter J.C."/>
        </authorList>
    </citation>
    <scope>NUCLEOTIDE SEQUENCE [LARGE SCALE GENOMIC DNA]</scope>
    <source>
        <strain>ATCC 51907 / DSM 11121 / KW20 / Rd</strain>
    </source>
</reference>
<proteinExistence type="inferred from homology"/>
<sequence>MYSKDVEIIASNGLHTRPAAQFVKEAKAFSSEITVTSGGKSASAKSLFKLQTLALTQGTILTISADGEDEQQAVEHLVALIPTLE</sequence>